<gene>
    <name type="primary">RCF1</name>
    <name type="synonym">AIM31</name>
    <name type="ORF">VDBG_03924</name>
</gene>
<sequence length="220" mass="24479">MPNVDDSVMGRQMPSSFDENHEFYNEKPMAKIFRKLREEPLIPLGAGLTVFAFTQAWRPMRRGDQVSANKMFRARVAAQGFTVLAMIAGSMYYNKDREATKELRKLKEERDSEEKRQKWIRELEIRDEEDKAMRARVMNRRAKAEEAKAGNASATPAEGGEAKSGVLNALGLSGSSSGWGKPGEAPLADASKAVDDEPIVSKVKTPTNVKRVSAEDDKTN</sequence>
<comment type="function">
    <text evidence="1">Cytochrome c oxidase subunit which plays a role in assembly of respiratory supercomplexes.</text>
</comment>
<comment type="subunit">
    <text evidence="1">Associates with the respiratory chain complex III/complex IV supercomplex.</text>
</comment>
<comment type="subcellular location">
    <subcellularLocation>
        <location evidence="3">Mitochondrion membrane</location>
        <topology evidence="3">Multi-pass membrane protein</topology>
    </subcellularLocation>
</comment>
<comment type="similarity">
    <text evidence="5">Belongs to the RCF1 family.</text>
</comment>
<keyword id="KW-0175">Coiled coil</keyword>
<keyword id="KW-0472">Membrane</keyword>
<keyword id="KW-0496">Mitochondrion</keyword>
<keyword id="KW-1185">Reference proteome</keyword>
<keyword id="KW-0812">Transmembrane</keyword>
<keyword id="KW-1133">Transmembrane helix</keyword>
<proteinExistence type="inferred from homology"/>
<protein>
    <recommendedName>
        <fullName>Respiratory supercomplex factor 1, mitochondrial</fullName>
    </recommendedName>
</protein>
<accession>C9SF29</accession>
<evidence type="ECO:0000250" key="1"/>
<evidence type="ECO:0000255" key="2"/>
<evidence type="ECO:0000255" key="3">
    <source>
        <dbReference type="PROSITE-ProRule" id="PRU00836"/>
    </source>
</evidence>
<evidence type="ECO:0000256" key="4">
    <source>
        <dbReference type="SAM" id="MobiDB-lite"/>
    </source>
</evidence>
<evidence type="ECO:0000305" key="5"/>
<name>RCF1_VERA1</name>
<dbReference type="EMBL" id="DS985217">
    <property type="protein sequence ID" value="EEY17815.1"/>
    <property type="molecule type" value="Genomic_DNA"/>
</dbReference>
<dbReference type="RefSeq" id="XP_003005971.1">
    <property type="nucleotide sequence ID" value="XM_003005925.1"/>
</dbReference>
<dbReference type="STRING" id="526221.C9SF29"/>
<dbReference type="GeneID" id="9532019"/>
<dbReference type="KEGG" id="val:VDBG_03924"/>
<dbReference type="eggNOG" id="KOG4431">
    <property type="taxonomic scope" value="Eukaryota"/>
</dbReference>
<dbReference type="HOGENOM" id="CLU_087356_0_0_1"/>
<dbReference type="OMA" id="YYRTERT"/>
<dbReference type="OrthoDB" id="6604018at2759"/>
<dbReference type="Proteomes" id="UP000008698">
    <property type="component" value="Unassembled WGS sequence"/>
</dbReference>
<dbReference type="GO" id="GO:0031966">
    <property type="term" value="C:mitochondrial membrane"/>
    <property type="evidence" value="ECO:0007669"/>
    <property type="project" value="UniProtKB-SubCell"/>
</dbReference>
<dbReference type="GO" id="GO:0097250">
    <property type="term" value="P:mitochondrial respirasome assembly"/>
    <property type="evidence" value="ECO:0007669"/>
    <property type="project" value="TreeGrafter"/>
</dbReference>
<dbReference type="Gene3D" id="6.10.140.1320">
    <property type="match status" value="1"/>
</dbReference>
<dbReference type="InterPro" id="IPR007667">
    <property type="entry name" value="Hypoxia_induced_domain"/>
</dbReference>
<dbReference type="InterPro" id="IPR050355">
    <property type="entry name" value="RCF1"/>
</dbReference>
<dbReference type="PANTHER" id="PTHR12297:SF3">
    <property type="entry name" value="HIG1 DOMAIN FAMILY MEMBER 1A"/>
    <property type="match status" value="1"/>
</dbReference>
<dbReference type="PANTHER" id="PTHR12297">
    <property type="entry name" value="HYPOXIA-INDUCBILE GENE 1 HIG1 -RELATED"/>
    <property type="match status" value="1"/>
</dbReference>
<dbReference type="Pfam" id="PF04588">
    <property type="entry name" value="HIG_1_N"/>
    <property type="match status" value="1"/>
</dbReference>
<dbReference type="PROSITE" id="PS51503">
    <property type="entry name" value="HIG1"/>
    <property type="match status" value="1"/>
</dbReference>
<organism>
    <name type="scientific">Verticillium alfalfae (strain VaMs.102 / ATCC MYA-4576 / FGSC 10136)</name>
    <name type="common">Verticillium wilt of alfalfa</name>
    <name type="synonym">Verticillium albo-atrum</name>
    <dbReference type="NCBI Taxonomy" id="526221"/>
    <lineage>
        <taxon>Eukaryota</taxon>
        <taxon>Fungi</taxon>
        <taxon>Dikarya</taxon>
        <taxon>Ascomycota</taxon>
        <taxon>Pezizomycotina</taxon>
        <taxon>Sordariomycetes</taxon>
        <taxon>Hypocreomycetidae</taxon>
        <taxon>Glomerellales</taxon>
        <taxon>Plectosphaerellaceae</taxon>
        <taxon>Verticillium</taxon>
    </lineage>
</organism>
<feature type="chain" id="PRO_0000399665" description="Respiratory supercomplex factor 1, mitochondrial">
    <location>
        <begin position="1"/>
        <end position="220"/>
    </location>
</feature>
<feature type="transmembrane region" description="Helical" evidence="3">
    <location>
        <begin position="41"/>
        <end position="57"/>
    </location>
</feature>
<feature type="transmembrane region" description="Helical" evidence="3">
    <location>
        <begin position="76"/>
        <end position="93"/>
    </location>
</feature>
<feature type="domain" description="HIG1" evidence="3">
    <location>
        <begin position="13"/>
        <end position="104"/>
    </location>
</feature>
<feature type="region of interest" description="Disordered" evidence="4">
    <location>
        <begin position="139"/>
        <end position="220"/>
    </location>
</feature>
<feature type="coiled-coil region" evidence="2">
    <location>
        <begin position="91"/>
        <end position="145"/>
    </location>
</feature>
<feature type="compositionally biased region" description="Low complexity" evidence="4">
    <location>
        <begin position="164"/>
        <end position="179"/>
    </location>
</feature>
<reference key="1">
    <citation type="journal article" date="2011" name="PLoS Pathog.">
        <title>Comparative genomics yields insights into niche adaptation of plant vascular wilt pathogens.</title>
        <authorList>
            <person name="Klosterman S.J."/>
            <person name="Subbarao K.V."/>
            <person name="Kang S."/>
            <person name="Veronese P."/>
            <person name="Gold S.E."/>
            <person name="Thomma B.P.H.J."/>
            <person name="Chen Z."/>
            <person name="Henrissat B."/>
            <person name="Lee Y.-H."/>
            <person name="Park J."/>
            <person name="Garcia-Pedrajas M.D."/>
            <person name="Barbara D.J."/>
            <person name="Anchieta A."/>
            <person name="de Jonge R."/>
            <person name="Santhanam P."/>
            <person name="Maruthachalam K."/>
            <person name="Atallah Z."/>
            <person name="Amyotte S.G."/>
            <person name="Paz Z."/>
            <person name="Inderbitzin P."/>
            <person name="Hayes R.J."/>
            <person name="Heiman D.I."/>
            <person name="Young S."/>
            <person name="Zeng Q."/>
            <person name="Engels R."/>
            <person name="Galagan J."/>
            <person name="Cuomo C.A."/>
            <person name="Dobinson K.F."/>
            <person name="Ma L.-J."/>
        </authorList>
    </citation>
    <scope>NUCLEOTIDE SEQUENCE [LARGE SCALE GENOMIC DNA]</scope>
    <source>
        <strain>VaMs.102 / ATCC MYA-4576 / FGSC 10136</strain>
    </source>
</reference>